<protein>
    <recommendedName>
        <fullName evidence="1">NADH-quinone oxidoreductase subunit C</fullName>
        <ecNumber evidence="1">7.1.1.-</ecNumber>
    </recommendedName>
    <alternativeName>
        <fullName evidence="1">NADH dehydrogenase I subunit C</fullName>
    </alternativeName>
    <alternativeName>
        <fullName evidence="1">NDH-1 subunit C</fullName>
    </alternativeName>
</protein>
<evidence type="ECO:0000255" key="1">
    <source>
        <dbReference type="HAMAP-Rule" id="MF_01357"/>
    </source>
</evidence>
<organism>
    <name type="scientific">Neisseria meningitidis serogroup A / serotype 4A (strain DSM 15465 / Z2491)</name>
    <dbReference type="NCBI Taxonomy" id="122587"/>
    <lineage>
        <taxon>Bacteria</taxon>
        <taxon>Pseudomonadati</taxon>
        <taxon>Pseudomonadota</taxon>
        <taxon>Betaproteobacteria</taxon>
        <taxon>Neisseriales</taxon>
        <taxon>Neisseriaceae</taxon>
        <taxon>Neisseria</taxon>
    </lineage>
</organism>
<feature type="chain" id="PRO_0000118672" description="NADH-quinone oxidoreductase subunit C">
    <location>
        <begin position="1"/>
        <end position="197"/>
    </location>
</feature>
<proteinExistence type="inferred from homology"/>
<keyword id="KW-0997">Cell inner membrane</keyword>
<keyword id="KW-1003">Cell membrane</keyword>
<keyword id="KW-0472">Membrane</keyword>
<keyword id="KW-0520">NAD</keyword>
<keyword id="KW-0874">Quinone</keyword>
<keyword id="KW-1278">Translocase</keyword>
<keyword id="KW-0813">Transport</keyword>
<keyword id="KW-0830">Ubiquinone</keyword>
<sequence>MASIQNLYETVVGVLGDQASKVISALGEITVECLPEHYISVMTALRDHEELHFELLVDLCGVDYSTYKNEVWQGKRFAVVSQLLSVKNNQRIRVRVWVSDDDFPVVESVVDIYNSADWYEREAFDMYGIMFNNHPDLRRILTDYGFVGHPFRKDFPISGYVEMRYDEEQKRVIYQPVTIEPREITPRIVREENYGGQ</sequence>
<dbReference type="EC" id="7.1.1.-" evidence="1"/>
<dbReference type="EMBL" id="AL157959">
    <property type="protein sequence ID" value="CAM07345.1"/>
    <property type="molecule type" value="Genomic_DNA"/>
</dbReference>
<dbReference type="PIR" id="E81992">
    <property type="entry name" value="E81992"/>
</dbReference>
<dbReference type="RefSeq" id="WP_002216335.1">
    <property type="nucleotide sequence ID" value="NC_003116.1"/>
</dbReference>
<dbReference type="SMR" id="Q9JX80"/>
<dbReference type="DNASU" id="906036"/>
<dbReference type="EnsemblBacteria" id="CAM07345">
    <property type="protein sequence ID" value="CAM07345"/>
    <property type="gene ID" value="NMA0017"/>
</dbReference>
<dbReference type="KEGG" id="nma:NMA0017"/>
<dbReference type="HOGENOM" id="CLU_042628_2_1_4"/>
<dbReference type="Proteomes" id="UP000000626">
    <property type="component" value="Chromosome"/>
</dbReference>
<dbReference type="GO" id="GO:0005886">
    <property type="term" value="C:plasma membrane"/>
    <property type="evidence" value="ECO:0007669"/>
    <property type="project" value="UniProtKB-SubCell"/>
</dbReference>
<dbReference type="GO" id="GO:0008137">
    <property type="term" value="F:NADH dehydrogenase (ubiquinone) activity"/>
    <property type="evidence" value="ECO:0007669"/>
    <property type="project" value="InterPro"/>
</dbReference>
<dbReference type="GO" id="GO:0050136">
    <property type="term" value="F:NADH:ubiquinone reductase (non-electrogenic) activity"/>
    <property type="evidence" value="ECO:0007669"/>
    <property type="project" value="UniProtKB-UniRule"/>
</dbReference>
<dbReference type="GO" id="GO:0048038">
    <property type="term" value="F:quinone binding"/>
    <property type="evidence" value="ECO:0007669"/>
    <property type="project" value="UniProtKB-KW"/>
</dbReference>
<dbReference type="Gene3D" id="3.30.460.80">
    <property type="entry name" value="NADH:ubiquinone oxidoreductase, 30kDa subunit"/>
    <property type="match status" value="1"/>
</dbReference>
<dbReference type="HAMAP" id="MF_01357">
    <property type="entry name" value="NDH1_NuoC"/>
    <property type="match status" value="1"/>
</dbReference>
<dbReference type="InterPro" id="IPR010218">
    <property type="entry name" value="NADH_DH_suC"/>
</dbReference>
<dbReference type="InterPro" id="IPR037232">
    <property type="entry name" value="NADH_quin_OxRdtase_su_C/D-like"/>
</dbReference>
<dbReference type="InterPro" id="IPR001268">
    <property type="entry name" value="NADH_UbQ_OxRdtase_30kDa_su"/>
</dbReference>
<dbReference type="InterPro" id="IPR020396">
    <property type="entry name" value="NADH_UbQ_OxRdtase_CS"/>
</dbReference>
<dbReference type="NCBIfam" id="TIGR01961">
    <property type="entry name" value="NuoC_fam"/>
    <property type="match status" value="1"/>
</dbReference>
<dbReference type="NCBIfam" id="NF004730">
    <property type="entry name" value="PRK06074.1-1"/>
    <property type="match status" value="1"/>
</dbReference>
<dbReference type="PANTHER" id="PTHR10884:SF14">
    <property type="entry name" value="NADH DEHYDROGENASE [UBIQUINONE] IRON-SULFUR PROTEIN 3, MITOCHONDRIAL"/>
    <property type="match status" value="1"/>
</dbReference>
<dbReference type="PANTHER" id="PTHR10884">
    <property type="entry name" value="NADH DEHYDROGENASE UBIQUINONE IRON-SULFUR PROTEIN 3"/>
    <property type="match status" value="1"/>
</dbReference>
<dbReference type="Pfam" id="PF00329">
    <property type="entry name" value="Complex1_30kDa"/>
    <property type="match status" value="1"/>
</dbReference>
<dbReference type="SUPFAM" id="SSF143243">
    <property type="entry name" value="Nqo5-like"/>
    <property type="match status" value="1"/>
</dbReference>
<dbReference type="PROSITE" id="PS00542">
    <property type="entry name" value="COMPLEX1_30K"/>
    <property type="match status" value="1"/>
</dbReference>
<name>NUOC_NEIMA</name>
<gene>
    <name evidence="1" type="primary">nuoC</name>
    <name type="ordered locus">NMA0017</name>
</gene>
<comment type="function">
    <text evidence="1">NDH-1 shuttles electrons from NADH, via FMN and iron-sulfur (Fe-S) centers, to quinones in the respiratory chain. The immediate electron acceptor for the enzyme in this species is believed to be ubiquinone. Couples the redox reaction to proton translocation (for every two electrons transferred, four hydrogen ions are translocated across the cytoplasmic membrane), and thus conserves the redox energy in a proton gradient.</text>
</comment>
<comment type="catalytic activity">
    <reaction evidence="1">
        <text>a quinone + NADH + 5 H(+)(in) = a quinol + NAD(+) + 4 H(+)(out)</text>
        <dbReference type="Rhea" id="RHEA:57888"/>
        <dbReference type="ChEBI" id="CHEBI:15378"/>
        <dbReference type="ChEBI" id="CHEBI:24646"/>
        <dbReference type="ChEBI" id="CHEBI:57540"/>
        <dbReference type="ChEBI" id="CHEBI:57945"/>
        <dbReference type="ChEBI" id="CHEBI:132124"/>
    </reaction>
</comment>
<comment type="subunit">
    <text evidence="1">NDH-1 is composed of 14 different subunits. Subunits NuoB, C, D, E, F, and G constitute the peripheral sector of the complex.</text>
</comment>
<comment type="subcellular location">
    <subcellularLocation>
        <location evidence="1">Cell inner membrane</location>
        <topology evidence="1">Peripheral membrane protein</topology>
        <orientation evidence="1">Cytoplasmic side</orientation>
    </subcellularLocation>
</comment>
<comment type="similarity">
    <text evidence="1">Belongs to the complex I 30 kDa subunit family.</text>
</comment>
<accession>Q9JX80</accession>
<accession>A1INN8</accession>
<reference key="1">
    <citation type="journal article" date="2000" name="Nature">
        <title>Complete DNA sequence of a serogroup A strain of Neisseria meningitidis Z2491.</title>
        <authorList>
            <person name="Parkhill J."/>
            <person name="Achtman M."/>
            <person name="James K.D."/>
            <person name="Bentley S.D."/>
            <person name="Churcher C.M."/>
            <person name="Klee S.R."/>
            <person name="Morelli G."/>
            <person name="Basham D."/>
            <person name="Brown D."/>
            <person name="Chillingworth T."/>
            <person name="Davies R.M."/>
            <person name="Davis P."/>
            <person name="Devlin K."/>
            <person name="Feltwell T."/>
            <person name="Hamlin N."/>
            <person name="Holroyd S."/>
            <person name="Jagels K."/>
            <person name="Leather S."/>
            <person name="Moule S."/>
            <person name="Mungall K.L."/>
            <person name="Quail M.A."/>
            <person name="Rajandream M.A."/>
            <person name="Rutherford K.M."/>
            <person name="Simmonds M."/>
            <person name="Skelton J."/>
            <person name="Whitehead S."/>
            <person name="Spratt B.G."/>
            <person name="Barrell B.G."/>
        </authorList>
    </citation>
    <scope>NUCLEOTIDE SEQUENCE [LARGE SCALE GENOMIC DNA]</scope>
    <source>
        <strain>DSM 15465 / Z2491</strain>
    </source>
</reference>